<keyword id="KW-0067">ATP-binding</keyword>
<keyword id="KW-0997">Cell inner membrane</keyword>
<keyword id="KW-1003">Cell membrane</keyword>
<keyword id="KW-0472">Membrane</keyword>
<keyword id="KW-0547">Nucleotide-binding</keyword>
<keyword id="KW-1278">Translocase</keyword>
<keyword id="KW-0813">Transport</keyword>
<proteinExistence type="inferred from homology"/>
<comment type="function">
    <text evidence="1">Part of the ABC transporter complex PotABCD involved in spermidine/putrescine import. Responsible for energy coupling to the transport system.</text>
</comment>
<comment type="catalytic activity">
    <reaction evidence="1">
        <text>ATP + H2O + polyamine-[polyamine-binding protein]Side 1 = ADP + phosphate + polyamineSide 2 + [polyamine-binding protein]Side 1.</text>
        <dbReference type="EC" id="7.6.2.11"/>
    </reaction>
</comment>
<comment type="subunit">
    <text evidence="1">The complex is composed of two ATP-binding proteins (PotA), two transmembrane proteins (PotB and PotC) and a solute-binding protein (PotD).</text>
</comment>
<comment type="subcellular location">
    <subcellularLocation>
        <location evidence="1">Cell inner membrane</location>
        <topology evidence="1">Peripheral membrane protein</topology>
    </subcellularLocation>
</comment>
<comment type="similarity">
    <text evidence="1">Belongs to the ABC transporter superfamily. Spermidine/putrescine importer (TC 3.A.1.11.1) family.</text>
</comment>
<reference key="1">
    <citation type="journal article" date="2014" name="Stand. Genomic Sci.">
        <title>Complete genome sequence of Anabaena variabilis ATCC 29413.</title>
        <authorList>
            <person name="Thiel T."/>
            <person name="Pratte B.S."/>
            <person name="Zhong J."/>
            <person name="Goodwin L."/>
            <person name="Copeland A."/>
            <person name="Lucas S."/>
            <person name="Han C."/>
            <person name="Pitluck S."/>
            <person name="Land M.L."/>
            <person name="Kyrpides N.C."/>
            <person name="Woyke T."/>
        </authorList>
    </citation>
    <scope>NUCLEOTIDE SEQUENCE [LARGE SCALE GENOMIC DNA]</scope>
    <source>
        <strain>ATCC 29413 / PCC 7937</strain>
    </source>
</reference>
<protein>
    <recommendedName>
        <fullName evidence="1">Spermidine/putrescine import ATP-binding protein PotA</fullName>
        <ecNumber evidence="1">7.6.2.11</ecNumber>
    </recommendedName>
</protein>
<name>POTA_TRIV2</name>
<dbReference type="EC" id="7.6.2.11" evidence="1"/>
<dbReference type="EMBL" id="CP000117">
    <property type="protein sequence ID" value="ABA21921.1"/>
    <property type="molecule type" value="Genomic_DNA"/>
</dbReference>
<dbReference type="SMR" id="Q3MAR5"/>
<dbReference type="STRING" id="240292.Ava_2303"/>
<dbReference type="TCDB" id="3.A.1.11.10">
    <property type="family name" value="the atp-binding cassette (abc) superfamily"/>
</dbReference>
<dbReference type="KEGG" id="ava:Ava_2303"/>
<dbReference type="eggNOG" id="COG3842">
    <property type="taxonomic scope" value="Bacteria"/>
</dbReference>
<dbReference type="HOGENOM" id="CLU_000604_1_1_3"/>
<dbReference type="Proteomes" id="UP000002533">
    <property type="component" value="Chromosome"/>
</dbReference>
<dbReference type="GO" id="GO:0043190">
    <property type="term" value="C:ATP-binding cassette (ABC) transporter complex"/>
    <property type="evidence" value="ECO:0007669"/>
    <property type="project" value="InterPro"/>
</dbReference>
<dbReference type="GO" id="GO:0015594">
    <property type="term" value="F:ABC-type putrescine transporter activity"/>
    <property type="evidence" value="ECO:0007669"/>
    <property type="project" value="InterPro"/>
</dbReference>
<dbReference type="GO" id="GO:0005524">
    <property type="term" value="F:ATP binding"/>
    <property type="evidence" value="ECO:0007669"/>
    <property type="project" value="UniProtKB-KW"/>
</dbReference>
<dbReference type="GO" id="GO:0016887">
    <property type="term" value="F:ATP hydrolysis activity"/>
    <property type="evidence" value="ECO:0007669"/>
    <property type="project" value="InterPro"/>
</dbReference>
<dbReference type="CDD" id="cd03300">
    <property type="entry name" value="ABC_PotA_N"/>
    <property type="match status" value="1"/>
</dbReference>
<dbReference type="FunFam" id="3.40.50.300:FF:000133">
    <property type="entry name" value="Spermidine/putrescine import ATP-binding protein PotA"/>
    <property type="match status" value="1"/>
</dbReference>
<dbReference type="Gene3D" id="2.40.50.100">
    <property type="match status" value="1"/>
</dbReference>
<dbReference type="Gene3D" id="3.40.50.300">
    <property type="entry name" value="P-loop containing nucleotide triphosphate hydrolases"/>
    <property type="match status" value="1"/>
</dbReference>
<dbReference type="InterPro" id="IPR003593">
    <property type="entry name" value="AAA+_ATPase"/>
</dbReference>
<dbReference type="InterPro" id="IPR050093">
    <property type="entry name" value="ABC_SmlMolc_Importer"/>
</dbReference>
<dbReference type="InterPro" id="IPR003439">
    <property type="entry name" value="ABC_transporter-like_ATP-bd"/>
</dbReference>
<dbReference type="InterPro" id="IPR017871">
    <property type="entry name" value="ABC_transporter-like_CS"/>
</dbReference>
<dbReference type="InterPro" id="IPR008995">
    <property type="entry name" value="Mo/tungstate-bd_C_term_dom"/>
</dbReference>
<dbReference type="InterPro" id="IPR027417">
    <property type="entry name" value="P-loop_NTPase"/>
</dbReference>
<dbReference type="InterPro" id="IPR005893">
    <property type="entry name" value="PotA-like"/>
</dbReference>
<dbReference type="InterPro" id="IPR017879">
    <property type="entry name" value="PotA_ATP-bd"/>
</dbReference>
<dbReference type="InterPro" id="IPR013611">
    <property type="entry name" value="Transp-assoc_OB_typ2"/>
</dbReference>
<dbReference type="NCBIfam" id="TIGR01187">
    <property type="entry name" value="potA"/>
    <property type="match status" value="1"/>
</dbReference>
<dbReference type="PANTHER" id="PTHR42781">
    <property type="entry name" value="SPERMIDINE/PUTRESCINE IMPORT ATP-BINDING PROTEIN POTA"/>
    <property type="match status" value="1"/>
</dbReference>
<dbReference type="PANTHER" id="PTHR42781:SF4">
    <property type="entry name" value="SPERMIDINE_PUTRESCINE IMPORT ATP-BINDING PROTEIN POTA"/>
    <property type="match status" value="1"/>
</dbReference>
<dbReference type="Pfam" id="PF00005">
    <property type="entry name" value="ABC_tran"/>
    <property type="match status" value="1"/>
</dbReference>
<dbReference type="Pfam" id="PF08402">
    <property type="entry name" value="TOBE_2"/>
    <property type="match status" value="1"/>
</dbReference>
<dbReference type="SMART" id="SM00382">
    <property type="entry name" value="AAA"/>
    <property type="match status" value="1"/>
</dbReference>
<dbReference type="SUPFAM" id="SSF50331">
    <property type="entry name" value="MOP-like"/>
    <property type="match status" value="1"/>
</dbReference>
<dbReference type="SUPFAM" id="SSF52540">
    <property type="entry name" value="P-loop containing nucleoside triphosphate hydrolases"/>
    <property type="match status" value="1"/>
</dbReference>
<dbReference type="PROSITE" id="PS00211">
    <property type="entry name" value="ABC_TRANSPORTER_1"/>
    <property type="match status" value="1"/>
</dbReference>
<dbReference type="PROSITE" id="PS50893">
    <property type="entry name" value="ABC_TRANSPORTER_2"/>
    <property type="match status" value="1"/>
</dbReference>
<dbReference type="PROSITE" id="PS51305">
    <property type="entry name" value="POTA"/>
    <property type="match status" value="1"/>
</dbReference>
<organism>
    <name type="scientific">Trichormus variabilis (strain ATCC 29413 / PCC 7937)</name>
    <name type="common">Anabaena variabilis</name>
    <dbReference type="NCBI Taxonomy" id="240292"/>
    <lineage>
        <taxon>Bacteria</taxon>
        <taxon>Bacillati</taxon>
        <taxon>Cyanobacteriota</taxon>
        <taxon>Cyanophyceae</taxon>
        <taxon>Nostocales</taxon>
        <taxon>Nostocaceae</taxon>
        <taxon>Trichormus</taxon>
    </lineage>
</organism>
<accession>Q3MAR5</accession>
<gene>
    <name evidence="1" type="primary">potA</name>
    <name type="ordered locus">Ava_2303</name>
</gene>
<feature type="chain" id="PRO_0000286189" description="Spermidine/putrescine import ATP-binding protein PotA">
    <location>
        <begin position="1"/>
        <end position="381"/>
    </location>
</feature>
<feature type="domain" description="ABC transporter" evidence="1">
    <location>
        <begin position="22"/>
        <end position="252"/>
    </location>
</feature>
<feature type="binding site" evidence="1">
    <location>
        <begin position="54"/>
        <end position="61"/>
    </location>
    <ligand>
        <name>ATP</name>
        <dbReference type="ChEBI" id="CHEBI:30616"/>
    </ligand>
</feature>
<evidence type="ECO:0000255" key="1">
    <source>
        <dbReference type="HAMAP-Rule" id="MF_01726"/>
    </source>
</evidence>
<sequence length="381" mass="42676">MNMAQTVTQNPRGVKTLLPLDVELRNVFKFFNQEPAVHGVDLDVKQGEFFSILGPSGCGKTTTLRLIAGFEQVDAGKLLIQGQPMTNIPPYRRPVNTVFQSYALFNHLNVWDNVAFGLRLKKSRKSEVESRVKEALKLVKMESLRSRFPSQLSGGQQQRVALARALVNRPAVVLLDEPLGALDLKLRKEMQVELSNLHKNLGLTFIMVTHDQEEALSLSDRIAVMNQGKIEQIGTPQEIYERPKTSFVADFIGDTNLFSGEITVLEAEYIQIVTKTGLTIVVARNEDTPAELLKSVVVSVRPEKIQLSLYPPSSLNNCFEGRLINVMYLGTHVNYLVQLINGININVLQPNTFGNLPDRETPIYAWWAESDCLAINQMTND</sequence>